<proteinExistence type="inferred from homology"/>
<sequence>MPIRRLPPELINRIAAGEVVERPASAVKELVENALDAGATKIEVQADGGGLTRILVADDGCGLSAEELPVAVERHATSKLNPGEDGEYDLLRIGTLGFRGEALPSIGSVARLSIASRARKADGSQAEAHAIFVEGGAVGAVSPAAFPGPHGARVEVRDLFYATPARLKFMKSERAEALAITEELKRQAMAHEAVSFALDVDGRRTLRLPAEAAGPDGRLARLSAIMGREFSDNALAIDHEREGVRLSGFAGLPTFNRGNAAHQYLFVNGRPVRDRLLQGALRAAYADFLARDRHPLAALYVELDPSQVDVNVHPAKAEVRFRDPGLVRGLIVGGLRHALAAAGHRASTTVSMAALGGFRPQSMPPPQPSAAGFSAWRQGGWTPSPAAAAAQILPGLSEVSARAEPEALDAYAAGGMAEAASPAPVFDPVDYPLGAARAQVHETYIVAQTRDGVVIVDQHAAHERLVYERMKAEMAEGGVARQALLLPEVVELDPAEAERVVARADELAALGLVVEAFGPGAVLVREVPALLGETDAAGLVRDIADDLSENGQALALKERLEEVCGTMACHGSVRAGRRLTAPEMNALLRQMEATPHSGQCNHGRPTYVELKLADIERLFGRR</sequence>
<evidence type="ECO:0000255" key="1">
    <source>
        <dbReference type="HAMAP-Rule" id="MF_00149"/>
    </source>
</evidence>
<feature type="chain" id="PRO_1000096671" description="DNA mismatch repair protein MutL">
    <location>
        <begin position="1"/>
        <end position="622"/>
    </location>
</feature>
<reference key="1">
    <citation type="journal article" date="2008" name="BMC Genomics">
        <title>Complete genome of Phenylobacterium zucineum - a novel facultative intracellular bacterium isolated from human erythroleukemia cell line K562.</title>
        <authorList>
            <person name="Luo Y."/>
            <person name="Xu X."/>
            <person name="Ding Z."/>
            <person name="Liu Z."/>
            <person name="Zhang B."/>
            <person name="Yan Z."/>
            <person name="Sun J."/>
            <person name="Hu S."/>
            <person name="Hu X."/>
        </authorList>
    </citation>
    <scope>NUCLEOTIDE SEQUENCE [LARGE SCALE GENOMIC DNA]</scope>
    <source>
        <strain>HLK1</strain>
    </source>
</reference>
<dbReference type="EMBL" id="CP000747">
    <property type="protein sequence ID" value="ACG79574.1"/>
    <property type="molecule type" value="Genomic_DNA"/>
</dbReference>
<dbReference type="RefSeq" id="WP_012523712.1">
    <property type="nucleotide sequence ID" value="NC_011144.1"/>
</dbReference>
<dbReference type="SMR" id="B4RA70"/>
<dbReference type="STRING" id="450851.PHZ_c3165"/>
<dbReference type="KEGG" id="pzu:PHZ_c3165"/>
<dbReference type="eggNOG" id="COG0323">
    <property type="taxonomic scope" value="Bacteria"/>
</dbReference>
<dbReference type="HOGENOM" id="CLU_004131_4_2_5"/>
<dbReference type="OrthoDB" id="9763467at2"/>
<dbReference type="Proteomes" id="UP000001868">
    <property type="component" value="Chromosome"/>
</dbReference>
<dbReference type="GO" id="GO:0032300">
    <property type="term" value="C:mismatch repair complex"/>
    <property type="evidence" value="ECO:0007669"/>
    <property type="project" value="InterPro"/>
</dbReference>
<dbReference type="GO" id="GO:0005524">
    <property type="term" value="F:ATP binding"/>
    <property type="evidence" value="ECO:0007669"/>
    <property type="project" value="InterPro"/>
</dbReference>
<dbReference type="GO" id="GO:0016887">
    <property type="term" value="F:ATP hydrolysis activity"/>
    <property type="evidence" value="ECO:0007669"/>
    <property type="project" value="InterPro"/>
</dbReference>
<dbReference type="GO" id="GO:0140664">
    <property type="term" value="F:ATP-dependent DNA damage sensor activity"/>
    <property type="evidence" value="ECO:0007669"/>
    <property type="project" value="InterPro"/>
</dbReference>
<dbReference type="GO" id="GO:0030983">
    <property type="term" value="F:mismatched DNA binding"/>
    <property type="evidence" value="ECO:0007669"/>
    <property type="project" value="InterPro"/>
</dbReference>
<dbReference type="GO" id="GO:0006298">
    <property type="term" value="P:mismatch repair"/>
    <property type="evidence" value="ECO:0007669"/>
    <property type="project" value="UniProtKB-UniRule"/>
</dbReference>
<dbReference type="CDD" id="cd16926">
    <property type="entry name" value="HATPase_MutL-MLH-PMS-like"/>
    <property type="match status" value="1"/>
</dbReference>
<dbReference type="CDD" id="cd00782">
    <property type="entry name" value="MutL_Trans"/>
    <property type="match status" value="1"/>
</dbReference>
<dbReference type="FunFam" id="3.30.565.10:FF:000003">
    <property type="entry name" value="DNA mismatch repair endonuclease MutL"/>
    <property type="match status" value="1"/>
</dbReference>
<dbReference type="Gene3D" id="3.30.230.10">
    <property type="match status" value="1"/>
</dbReference>
<dbReference type="Gene3D" id="3.30.565.10">
    <property type="entry name" value="Histidine kinase-like ATPase, C-terminal domain"/>
    <property type="match status" value="1"/>
</dbReference>
<dbReference type="Gene3D" id="3.30.1540.20">
    <property type="entry name" value="MutL, C-terminal domain, dimerisation subdomain"/>
    <property type="match status" value="1"/>
</dbReference>
<dbReference type="Gene3D" id="3.30.1370.100">
    <property type="entry name" value="MutL, C-terminal domain, regulatory subdomain"/>
    <property type="match status" value="1"/>
</dbReference>
<dbReference type="HAMAP" id="MF_00149">
    <property type="entry name" value="DNA_mis_repair"/>
    <property type="match status" value="1"/>
</dbReference>
<dbReference type="InterPro" id="IPR014762">
    <property type="entry name" value="DNA_mismatch_repair_CS"/>
</dbReference>
<dbReference type="InterPro" id="IPR020667">
    <property type="entry name" value="DNA_mismatch_repair_MutL"/>
</dbReference>
<dbReference type="InterPro" id="IPR013507">
    <property type="entry name" value="DNA_mismatch_S5_2-like"/>
</dbReference>
<dbReference type="InterPro" id="IPR036890">
    <property type="entry name" value="HATPase_C_sf"/>
</dbReference>
<dbReference type="InterPro" id="IPR002099">
    <property type="entry name" value="MutL/Mlh/PMS"/>
</dbReference>
<dbReference type="InterPro" id="IPR038973">
    <property type="entry name" value="MutL/Mlh/Pms-like"/>
</dbReference>
<dbReference type="InterPro" id="IPR014790">
    <property type="entry name" value="MutL_C"/>
</dbReference>
<dbReference type="InterPro" id="IPR042120">
    <property type="entry name" value="MutL_C_dimsub"/>
</dbReference>
<dbReference type="InterPro" id="IPR042121">
    <property type="entry name" value="MutL_C_regsub"/>
</dbReference>
<dbReference type="InterPro" id="IPR037198">
    <property type="entry name" value="MutL_C_sf"/>
</dbReference>
<dbReference type="InterPro" id="IPR020568">
    <property type="entry name" value="Ribosomal_Su5_D2-typ_SF"/>
</dbReference>
<dbReference type="InterPro" id="IPR014721">
    <property type="entry name" value="Ribsml_uS5_D2-typ_fold_subgr"/>
</dbReference>
<dbReference type="NCBIfam" id="TIGR00585">
    <property type="entry name" value="mutl"/>
    <property type="match status" value="1"/>
</dbReference>
<dbReference type="NCBIfam" id="NF000953">
    <property type="entry name" value="PRK00095.2-4"/>
    <property type="match status" value="1"/>
</dbReference>
<dbReference type="PANTHER" id="PTHR10073">
    <property type="entry name" value="DNA MISMATCH REPAIR PROTEIN MLH, PMS, MUTL"/>
    <property type="match status" value="1"/>
</dbReference>
<dbReference type="PANTHER" id="PTHR10073:SF12">
    <property type="entry name" value="DNA MISMATCH REPAIR PROTEIN MLH1"/>
    <property type="match status" value="1"/>
</dbReference>
<dbReference type="Pfam" id="PF01119">
    <property type="entry name" value="DNA_mis_repair"/>
    <property type="match status" value="1"/>
</dbReference>
<dbReference type="Pfam" id="PF13589">
    <property type="entry name" value="HATPase_c_3"/>
    <property type="match status" value="1"/>
</dbReference>
<dbReference type="Pfam" id="PF08676">
    <property type="entry name" value="MutL_C"/>
    <property type="match status" value="1"/>
</dbReference>
<dbReference type="SMART" id="SM01340">
    <property type="entry name" value="DNA_mis_repair"/>
    <property type="match status" value="1"/>
</dbReference>
<dbReference type="SMART" id="SM00853">
    <property type="entry name" value="MutL_C"/>
    <property type="match status" value="1"/>
</dbReference>
<dbReference type="SUPFAM" id="SSF55874">
    <property type="entry name" value="ATPase domain of HSP90 chaperone/DNA topoisomerase II/histidine kinase"/>
    <property type="match status" value="1"/>
</dbReference>
<dbReference type="SUPFAM" id="SSF118116">
    <property type="entry name" value="DNA mismatch repair protein MutL"/>
    <property type="match status" value="1"/>
</dbReference>
<dbReference type="SUPFAM" id="SSF54211">
    <property type="entry name" value="Ribosomal protein S5 domain 2-like"/>
    <property type="match status" value="1"/>
</dbReference>
<dbReference type="PROSITE" id="PS00058">
    <property type="entry name" value="DNA_MISMATCH_REPAIR_1"/>
    <property type="match status" value="1"/>
</dbReference>
<gene>
    <name evidence="1" type="primary">mutL</name>
    <name type="ordered locus">PHZ_c3165</name>
</gene>
<accession>B4RA70</accession>
<keyword id="KW-0227">DNA damage</keyword>
<keyword id="KW-0234">DNA repair</keyword>
<keyword id="KW-1185">Reference proteome</keyword>
<organism>
    <name type="scientific">Phenylobacterium zucineum (strain HLK1)</name>
    <dbReference type="NCBI Taxonomy" id="450851"/>
    <lineage>
        <taxon>Bacteria</taxon>
        <taxon>Pseudomonadati</taxon>
        <taxon>Pseudomonadota</taxon>
        <taxon>Alphaproteobacteria</taxon>
        <taxon>Caulobacterales</taxon>
        <taxon>Caulobacteraceae</taxon>
        <taxon>Phenylobacterium</taxon>
    </lineage>
</organism>
<comment type="function">
    <text evidence="1">This protein is involved in the repair of mismatches in DNA. It is required for dam-dependent methyl-directed DNA mismatch repair. May act as a 'molecular matchmaker', a protein that promotes the formation of a stable complex between two or more DNA-binding proteins in an ATP-dependent manner without itself being part of a final effector complex.</text>
</comment>
<comment type="similarity">
    <text evidence="1">Belongs to the DNA mismatch repair MutL/HexB family.</text>
</comment>
<name>MUTL_PHEZH</name>
<protein>
    <recommendedName>
        <fullName evidence="1">DNA mismatch repair protein MutL</fullName>
    </recommendedName>
</protein>